<accession>A9WW36</accession>
<evidence type="ECO:0000255" key="1">
    <source>
        <dbReference type="HAMAP-Rule" id="MF_00082"/>
    </source>
</evidence>
<name>ARGB_BRUSI</name>
<reference key="1">
    <citation type="submission" date="2007-12" db="EMBL/GenBank/DDBJ databases">
        <title>Brucella suis ATCC 23445 whole genome shotgun sequencing project.</title>
        <authorList>
            <person name="Setubal J.C."/>
            <person name="Bowns C."/>
            <person name="Boyle S."/>
            <person name="Crasta O.R."/>
            <person name="Czar M.J."/>
            <person name="Dharmanolla C."/>
            <person name="Gillespie J.J."/>
            <person name="Kenyon R.W."/>
            <person name="Lu J."/>
            <person name="Mane S."/>
            <person name="Mohapatra S."/>
            <person name="Nagrani S."/>
            <person name="Purkayastha A."/>
            <person name="Rajasimha H.K."/>
            <person name="Shallom J.M."/>
            <person name="Shallom S."/>
            <person name="Shukla M."/>
            <person name="Snyder E.E."/>
            <person name="Sobral B.W."/>
            <person name="Wattam A.R."/>
            <person name="Will R."/>
            <person name="Williams K."/>
            <person name="Yoo H."/>
            <person name="Bruce D."/>
            <person name="Detter C."/>
            <person name="Munk C."/>
            <person name="Brettin T.S."/>
        </authorList>
    </citation>
    <scope>NUCLEOTIDE SEQUENCE [LARGE SCALE GENOMIC DNA]</scope>
    <source>
        <strain>ATCC 23445 / NCTC 10510</strain>
    </source>
</reference>
<gene>
    <name evidence="1" type="primary">argB</name>
    <name type="ordered locus">BSUIS_B1021</name>
</gene>
<sequence length="296" mass="31499">MTTLENPEMQAQLLSAALPYMQRYENKHVVVKYGGHAMGNPELGKAFARDVALLKQSGVNPIVVHGGGPQIQAMLTKLGIESRFEGGLRVTDEKTVEVVEMVLAGSINKEIVALINAEGEWAIGLCGKDGNMVFAQKAHKTVIDPDSNIEKVLDLGFVGEPAEVDRTLLDLLARSEMIPVIAPVAPGRDGHTYNINADTFAGAIAGALAATRLLFLTDVPGVLDKDKKLIKELSVADAQALIRDGTISGGMIPKVETCIDAIRRGVEGVVILNGKTPHSVLLELFTEHGAGTLIVP</sequence>
<organism>
    <name type="scientific">Brucella suis (strain ATCC 23445 / NCTC 10510)</name>
    <dbReference type="NCBI Taxonomy" id="470137"/>
    <lineage>
        <taxon>Bacteria</taxon>
        <taxon>Pseudomonadati</taxon>
        <taxon>Pseudomonadota</taxon>
        <taxon>Alphaproteobacteria</taxon>
        <taxon>Hyphomicrobiales</taxon>
        <taxon>Brucellaceae</taxon>
        <taxon>Brucella/Ochrobactrum group</taxon>
        <taxon>Brucella</taxon>
    </lineage>
</organism>
<keyword id="KW-0028">Amino-acid biosynthesis</keyword>
<keyword id="KW-0055">Arginine biosynthesis</keyword>
<keyword id="KW-0067">ATP-binding</keyword>
<keyword id="KW-0963">Cytoplasm</keyword>
<keyword id="KW-0418">Kinase</keyword>
<keyword id="KW-0547">Nucleotide-binding</keyword>
<keyword id="KW-0808">Transferase</keyword>
<feature type="chain" id="PRO_1000075304" description="Acetylglutamate kinase">
    <location>
        <begin position="1"/>
        <end position="296"/>
    </location>
</feature>
<feature type="binding site" evidence="1">
    <location>
        <begin position="67"/>
        <end position="68"/>
    </location>
    <ligand>
        <name>substrate</name>
    </ligand>
</feature>
<feature type="binding site" evidence="1">
    <location>
        <position position="89"/>
    </location>
    <ligand>
        <name>substrate</name>
    </ligand>
</feature>
<feature type="binding site" evidence="1">
    <location>
        <position position="194"/>
    </location>
    <ligand>
        <name>substrate</name>
    </ligand>
</feature>
<feature type="site" description="Transition state stabilizer" evidence="1">
    <location>
        <position position="32"/>
    </location>
</feature>
<feature type="site" description="Transition state stabilizer" evidence="1">
    <location>
        <position position="254"/>
    </location>
</feature>
<comment type="function">
    <text evidence="1">Catalyzes the ATP-dependent phosphorylation of N-acetyl-L-glutamate.</text>
</comment>
<comment type="catalytic activity">
    <reaction evidence="1">
        <text>N-acetyl-L-glutamate + ATP = N-acetyl-L-glutamyl 5-phosphate + ADP</text>
        <dbReference type="Rhea" id="RHEA:14629"/>
        <dbReference type="ChEBI" id="CHEBI:30616"/>
        <dbReference type="ChEBI" id="CHEBI:44337"/>
        <dbReference type="ChEBI" id="CHEBI:57936"/>
        <dbReference type="ChEBI" id="CHEBI:456216"/>
        <dbReference type="EC" id="2.7.2.8"/>
    </reaction>
</comment>
<comment type="pathway">
    <text evidence="1">Amino-acid biosynthesis; L-arginine biosynthesis; N(2)-acetyl-L-ornithine from L-glutamate: step 2/4.</text>
</comment>
<comment type="subcellular location">
    <subcellularLocation>
        <location evidence="1">Cytoplasm</location>
    </subcellularLocation>
</comment>
<comment type="similarity">
    <text evidence="1">Belongs to the acetylglutamate kinase family. ArgB subfamily.</text>
</comment>
<protein>
    <recommendedName>
        <fullName evidence="1">Acetylglutamate kinase</fullName>
        <ecNumber evidence="1">2.7.2.8</ecNumber>
    </recommendedName>
    <alternativeName>
        <fullName evidence="1">N-acetyl-L-glutamate 5-phosphotransferase</fullName>
    </alternativeName>
    <alternativeName>
        <fullName evidence="1">NAG kinase</fullName>
        <shortName evidence="1">NAGK</shortName>
    </alternativeName>
</protein>
<dbReference type="EC" id="2.7.2.8" evidence="1"/>
<dbReference type="EMBL" id="CP000912">
    <property type="protein sequence ID" value="ABY39972.1"/>
    <property type="molecule type" value="Genomic_DNA"/>
</dbReference>
<dbReference type="RefSeq" id="WP_004687040.1">
    <property type="nucleotide sequence ID" value="NC_010167.1"/>
</dbReference>
<dbReference type="SMR" id="A9WW36"/>
<dbReference type="GeneID" id="97534925"/>
<dbReference type="KEGG" id="bmt:BSUIS_B1021"/>
<dbReference type="HOGENOM" id="CLU_053680_0_0_5"/>
<dbReference type="UniPathway" id="UPA00068">
    <property type="reaction ID" value="UER00107"/>
</dbReference>
<dbReference type="Proteomes" id="UP000008545">
    <property type="component" value="Chromosome II"/>
</dbReference>
<dbReference type="GO" id="GO:0005737">
    <property type="term" value="C:cytoplasm"/>
    <property type="evidence" value="ECO:0007669"/>
    <property type="project" value="UniProtKB-SubCell"/>
</dbReference>
<dbReference type="GO" id="GO:0003991">
    <property type="term" value="F:acetylglutamate kinase activity"/>
    <property type="evidence" value="ECO:0007669"/>
    <property type="project" value="UniProtKB-UniRule"/>
</dbReference>
<dbReference type="GO" id="GO:0005524">
    <property type="term" value="F:ATP binding"/>
    <property type="evidence" value="ECO:0007669"/>
    <property type="project" value="UniProtKB-UniRule"/>
</dbReference>
<dbReference type="GO" id="GO:0042450">
    <property type="term" value="P:arginine biosynthetic process via ornithine"/>
    <property type="evidence" value="ECO:0007669"/>
    <property type="project" value="UniProtKB-UniRule"/>
</dbReference>
<dbReference type="GO" id="GO:0006526">
    <property type="term" value="P:L-arginine biosynthetic process"/>
    <property type="evidence" value="ECO:0007669"/>
    <property type="project" value="UniProtKB-UniPathway"/>
</dbReference>
<dbReference type="CDD" id="cd04250">
    <property type="entry name" value="AAK_NAGK-C"/>
    <property type="match status" value="1"/>
</dbReference>
<dbReference type="FunFam" id="3.40.1160.10:FF:000004">
    <property type="entry name" value="Acetylglutamate kinase"/>
    <property type="match status" value="1"/>
</dbReference>
<dbReference type="Gene3D" id="3.40.1160.10">
    <property type="entry name" value="Acetylglutamate kinase-like"/>
    <property type="match status" value="1"/>
</dbReference>
<dbReference type="HAMAP" id="MF_00082">
    <property type="entry name" value="ArgB"/>
    <property type="match status" value="1"/>
</dbReference>
<dbReference type="InterPro" id="IPR036393">
    <property type="entry name" value="AceGlu_kinase-like_sf"/>
</dbReference>
<dbReference type="InterPro" id="IPR004662">
    <property type="entry name" value="AcgluKinase_fam"/>
</dbReference>
<dbReference type="InterPro" id="IPR037528">
    <property type="entry name" value="ArgB"/>
</dbReference>
<dbReference type="InterPro" id="IPR001048">
    <property type="entry name" value="Asp/Glu/Uridylate_kinase"/>
</dbReference>
<dbReference type="InterPro" id="IPR041727">
    <property type="entry name" value="NAGK-C"/>
</dbReference>
<dbReference type="NCBIfam" id="TIGR00761">
    <property type="entry name" value="argB"/>
    <property type="match status" value="1"/>
</dbReference>
<dbReference type="PANTHER" id="PTHR23342">
    <property type="entry name" value="N-ACETYLGLUTAMATE SYNTHASE"/>
    <property type="match status" value="1"/>
</dbReference>
<dbReference type="PANTHER" id="PTHR23342:SF0">
    <property type="entry name" value="N-ACETYLGLUTAMATE SYNTHASE, MITOCHONDRIAL"/>
    <property type="match status" value="1"/>
</dbReference>
<dbReference type="Pfam" id="PF00696">
    <property type="entry name" value="AA_kinase"/>
    <property type="match status" value="1"/>
</dbReference>
<dbReference type="PIRSF" id="PIRSF000728">
    <property type="entry name" value="NAGK"/>
    <property type="match status" value="1"/>
</dbReference>
<dbReference type="SUPFAM" id="SSF53633">
    <property type="entry name" value="Carbamate kinase-like"/>
    <property type="match status" value="1"/>
</dbReference>
<proteinExistence type="inferred from homology"/>